<gene>
    <name type="primary">RAG8</name>
    <name type="ordered locus">KLLA0D11044g</name>
</gene>
<accession>P40230</accession>
<accession>Q6CR85</accession>
<proteinExistence type="inferred from homology"/>
<evidence type="ECO:0000250" key="1"/>
<evidence type="ECO:0000255" key="2">
    <source>
        <dbReference type="PROSITE-ProRule" id="PRU00159"/>
    </source>
</evidence>
<evidence type="ECO:0000255" key="3">
    <source>
        <dbReference type="PROSITE-ProRule" id="PRU10027"/>
    </source>
</evidence>
<evidence type="ECO:0000256" key="4">
    <source>
        <dbReference type="SAM" id="MobiDB-lite"/>
    </source>
</evidence>
<evidence type="ECO:0000305" key="5"/>
<name>RAG8_KLULA</name>
<feature type="chain" id="PRO_0000192860" description="Casein kinase I homolog RAG8">
    <location>
        <begin position="1"/>
        <end position="536"/>
    </location>
</feature>
<feature type="domain" description="Protein kinase" evidence="2">
    <location>
        <begin position="77"/>
        <end position="361"/>
    </location>
</feature>
<feature type="region of interest" description="Disordered" evidence="4">
    <location>
        <begin position="26"/>
        <end position="68"/>
    </location>
</feature>
<feature type="region of interest" description="Disordered" evidence="4">
    <location>
        <begin position="407"/>
        <end position="524"/>
    </location>
</feature>
<feature type="compositionally biased region" description="Polar residues" evidence="4">
    <location>
        <begin position="26"/>
        <end position="42"/>
    </location>
</feature>
<feature type="compositionally biased region" description="Low complexity" evidence="4">
    <location>
        <begin position="43"/>
        <end position="65"/>
    </location>
</feature>
<feature type="compositionally biased region" description="Polar residues" evidence="4">
    <location>
        <begin position="407"/>
        <end position="420"/>
    </location>
</feature>
<feature type="compositionally biased region" description="Polar residues" evidence="4">
    <location>
        <begin position="427"/>
        <end position="436"/>
    </location>
</feature>
<feature type="compositionally biased region" description="Low complexity" evidence="4">
    <location>
        <begin position="437"/>
        <end position="453"/>
    </location>
</feature>
<feature type="compositionally biased region" description="Low complexity" evidence="4">
    <location>
        <begin position="463"/>
        <end position="514"/>
    </location>
</feature>
<feature type="active site" description="Proton acceptor" evidence="2 3">
    <location>
        <position position="196"/>
    </location>
</feature>
<feature type="binding site" evidence="2">
    <location>
        <begin position="83"/>
        <end position="91"/>
    </location>
    <ligand>
        <name>ATP</name>
        <dbReference type="ChEBI" id="CHEBI:30616"/>
    </ligand>
</feature>
<feature type="binding site" evidence="2">
    <location>
        <position position="106"/>
    </location>
    <ligand>
        <name>ATP</name>
        <dbReference type="ChEBI" id="CHEBI:30616"/>
    </ligand>
</feature>
<feature type="lipid moiety-binding region" description="S-palmitoyl cysteine" evidence="1">
    <location>
        <position position="535"/>
    </location>
</feature>
<feature type="lipid moiety-binding region" description="S-palmitoyl cysteine" evidence="1">
    <location>
        <position position="536"/>
    </location>
</feature>
<feature type="sequence conflict" description="In Ref. 1; CAA56127." evidence="5" ref="1">
    <location>
        <position position="531"/>
    </location>
</feature>
<dbReference type="EC" id="2.7.11.1"/>
<dbReference type="EMBL" id="X79679">
    <property type="protein sequence ID" value="CAA56127.1"/>
    <property type="molecule type" value="Genomic_DNA"/>
</dbReference>
<dbReference type="EMBL" id="CR382124">
    <property type="protein sequence ID" value="CAH00650.1"/>
    <property type="molecule type" value="Genomic_DNA"/>
</dbReference>
<dbReference type="PIR" id="S47131">
    <property type="entry name" value="S47131"/>
</dbReference>
<dbReference type="RefSeq" id="XP_453554.1">
    <property type="nucleotide sequence ID" value="XM_453554.1"/>
</dbReference>
<dbReference type="SMR" id="P40230"/>
<dbReference type="FunCoup" id="P40230">
    <property type="interactions" value="727"/>
</dbReference>
<dbReference type="STRING" id="284590.P40230"/>
<dbReference type="PaxDb" id="284590-P40230"/>
<dbReference type="KEGG" id="kla:KLLA0_D11044g"/>
<dbReference type="eggNOG" id="KOG1165">
    <property type="taxonomic scope" value="Eukaryota"/>
</dbReference>
<dbReference type="HOGENOM" id="CLU_019279_1_0_1"/>
<dbReference type="InParanoid" id="P40230"/>
<dbReference type="Proteomes" id="UP000000598">
    <property type="component" value="Chromosome D"/>
</dbReference>
<dbReference type="GO" id="GO:0005524">
    <property type="term" value="F:ATP binding"/>
    <property type="evidence" value="ECO:0007669"/>
    <property type="project" value="UniProtKB-KW"/>
</dbReference>
<dbReference type="GO" id="GO:0106310">
    <property type="term" value="F:protein serine kinase activity"/>
    <property type="evidence" value="ECO:0007669"/>
    <property type="project" value="RHEA"/>
</dbReference>
<dbReference type="GO" id="GO:0004674">
    <property type="term" value="F:protein serine/threonine kinase activity"/>
    <property type="evidence" value="ECO:0007669"/>
    <property type="project" value="UniProtKB-KW"/>
</dbReference>
<dbReference type="CDD" id="cd14127">
    <property type="entry name" value="STKc_CK1_fungal"/>
    <property type="match status" value="1"/>
</dbReference>
<dbReference type="FunFam" id="1.10.510.10:FF:001123">
    <property type="entry name" value="CK1/CK1/CK1-D protein kinase"/>
    <property type="match status" value="1"/>
</dbReference>
<dbReference type="FunFam" id="3.30.200.20:FF:000538">
    <property type="entry name" value="Putative Casein kinase I"/>
    <property type="match status" value="1"/>
</dbReference>
<dbReference type="Gene3D" id="1.10.510.10">
    <property type="entry name" value="Transferase(Phosphotransferase) domain 1"/>
    <property type="match status" value="1"/>
</dbReference>
<dbReference type="InterPro" id="IPR050235">
    <property type="entry name" value="CK1_Ser-Thr_kinase"/>
</dbReference>
<dbReference type="InterPro" id="IPR011009">
    <property type="entry name" value="Kinase-like_dom_sf"/>
</dbReference>
<dbReference type="InterPro" id="IPR000719">
    <property type="entry name" value="Prot_kinase_dom"/>
</dbReference>
<dbReference type="InterPro" id="IPR017441">
    <property type="entry name" value="Protein_kinase_ATP_BS"/>
</dbReference>
<dbReference type="InterPro" id="IPR008271">
    <property type="entry name" value="Ser/Thr_kinase_AS"/>
</dbReference>
<dbReference type="PANTHER" id="PTHR11909">
    <property type="entry name" value="CASEIN KINASE-RELATED"/>
    <property type="match status" value="1"/>
</dbReference>
<dbReference type="Pfam" id="PF00069">
    <property type="entry name" value="Pkinase"/>
    <property type="match status" value="1"/>
</dbReference>
<dbReference type="SMART" id="SM00220">
    <property type="entry name" value="S_TKc"/>
    <property type="match status" value="1"/>
</dbReference>
<dbReference type="SUPFAM" id="SSF56112">
    <property type="entry name" value="Protein kinase-like (PK-like)"/>
    <property type="match status" value="1"/>
</dbReference>
<dbReference type="PROSITE" id="PS00107">
    <property type="entry name" value="PROTEIN_KINASE_ATP"/>
    <property type="match status" value="1"/>
</dbReference>
<dbReference type="PROSITE" id="PS50011">
    <property type="entry name" value="PROTEIN_KINASE_DOM"/>
    <property type="match status" value="1"/>
</dbReference>
<dbReference type="PROSITE" id="PS00108">
    <property type="entry name" value="PROTEIN_KINASE_ST"/>
    <property type="match status" value="1"/>
</dbReference>
<comment type="function">
    <text>Casein kinases are operationally defined by their preferential utilization of acidic proteins such as caseins as substrates.</text>
</comment>
<comment type="catalytic activity">
    <reaction>
        <text>L-seryl-[protein] + ATP = O-phospho-L-seryl-[protein] + ADP + H(+)</text>
        <dbReference type="Rhea" id="RHEA:17989"/>
        <dbReference type="Rhea" id="RHEA-COMP:9863"/>
        <dbReference type="Rhea" id="RHEA-COMP:11604"/>
        <dbReference type="ChEBI" id="CHEBI:15378"/>
        <dbReference type="ChEBI" id="CHEBI:29999"/>
        <dbReference type="ChEBI" id="CHEBI:30616"/>
        <dbReference type="ChEBI" id="CHEBI:83421"/>
        <dbReference type="ChEBI" id="CHEBI:456216"/>
        <dbReference type="EC" id="2.7.11.1"/>
    </reaction>
</comment>
<comment type="catalytic activity">
    <reaction>
        <text>L-threonyl-[protein] + ATP = O-phospho-L-threonyl-[protein] + ADP + H(+)</text>
        <dbReference type="Rhea" id="RHEA:46608"/>
        <dbReference type="Rhea" id="RHEA-COMP:11060"/>
        <dbReference type="Rhea" id="RHEA-COMP:11605"/>
        <dbReference type="ChEBI" id="CHEBI:15378"/>
        <dbReference type="ChEBI" id="CHEBI:30013"/>
        <dbReference type="ChEBI" id="CHEBI:30616"/>
        <dbReference type="ChEBI" id="CHEBI:61977"/>
        <dbReference type="ChEBI" id="CHEBI:456216"/>
        <dbReference type="EC" id="2.7.11.1"/>
    </reaction>
</comment>
<comment type="similarity">
    <text evidence="5">Belongs to the protein kinase superfamily. CK1 Ser/Thr protein kinase family. Casein kinase I subfamily.</text>
</comment>
<reference key="1">
    <citation type="submission" date="1994-06" db="EMBL/GenBank/DDBJ databases">
        <authorList>
            <person name="Wesolowski-Louvel M."/>
        </authorList>
    </citation>
    <scope>NUCLEOTIDE SEQUENCE [GENOMIC DNA]</scope>
    <source>
        <strain>ATCC 76492 / CBS 2359/152 / CLIB 210</strain>
    </source>
</reference>
<reference key="2">
    <citation type="journal article" date="2004" name="Nature">
        <title>Genome evolution in yeasts.</title>
        <authorList>
            <person name="Dujon B."/>
            <person name="Sherman D."/>
            <person name="Fischer G."/>
            <person name="Durrens P."/>
            <person name="Casaregola S."/>
            <person name="Lafontaine I."/>
            <person name="de Montigny J."/>
            <person name="Marck C."/>
            <person name="Neuveglise C."/>
            <person name="Talla E."/>
            <person name="Goffard N."/>
            <person name="Frangeul L."/>
            <person name="Aigle M."/>
            <person name="Anthouard V."/>
            <person name="Babour A."/>
            <person name="Barbe V."/>
            <person name="Barnay S."/>
            <person name="Blanchin S."/>
            <person name="Beckerich J.-M."/>
            <person name="Beyne E."/>
            <person name="Bleykasten C."/>
            <person name="Boisrame A."/>
            <person name="Boyer J."/>
            <person name="Cattolico L."/>
            <person name="Confanioleri F."/>
            <person name="de Daruvar A."/>
            <person name="Despons L."/>
            <person name="Fabre E."/>
            <person name="Fairhead C."/>
            <person name="Ferry-Dumazet H."/>
            <person name="Groppi A."/>
            <person name="Hantraye F."/>
            <person name="Hennequin C."/>
            <person name="Jauniaux N."/>
            <person name="Joyet P."/>
            <person name="Kachouri R."/>
            <person name="Kerrest A."/>
            <person name="Koszul R."/>
            <person name="Lemaire M."/>
            <person name="Lesur I."/>
            <person name="Ma L."/>
            <person name="Muller H."/>
            <person name="Nicaud J.-M."/>
            <person name="Nikolski M."/>
            <person name="Oztas S."/>
            <person name="Ozier-Kalogeropoulos O."/>
            <person name="Pellenz S."/>
            <person name="Potier S."/>
            <person name="Richard G.-F."/>
            <person name="Straub M.-L."/>
            <person name="Suleau A."/>
            <person name="Swennen D."/>
            <person name="Tekaia F."/>
            <person name="Wesolowski-Louvel M."/>
            <person name="Westhof E."/>
            <person name="Wirth B."/>
            <person name="Zeniou-Meyer M."/>
            <person name="Zivanovic Y."/>
            <person name="Bolotin-Fukuhara M."/>
            <person name="Thierry A."/>
            <person name="Bouchier C."/>
            <person name="Caudron B."/>
            <person name="Scarpelli C."/>
            <person name="Gaillardin C."/>
            <person name="Weissenbach J."/>
            <person name="Wincker P."/>
            <person name="Souciet J.-L."/>
        </authorList>
    </citation>
    <scope>NUCLEOTIDE SEQUENCE [LARGE SCALE GENOMIC DNA]</scope>
    <source>
        <strain>ATCC 8585 / CBS 2359 / DSM 70799 / NBRC 1267 / NRRL Y-1140 / WM37</strain>
    </source>
</reference>
<keyword id="KW-0067">ATP-binding</keyword>
<keyword id="KW-0418">Kinase</keyword>
<keyword id="KW-0449">Lipoprotein</keyword>
<keyword id="KW-0547">Nucleotide-binding</keyword>
<keyword id="KW-0564">Palmitate</keyword>
<keyword id="KW-1185">Reference proteome</keyword>
<keyword id="KW-0723">Serine/threonine-protein kinase</keyword>
<keyword id="KW-0808">Transferase</keyword>
<protein>
    <recommendedName>
        <fullName>Casein kinase I homolog RAG8</fullName>
        <ecNumber>2.7.11.1</ecNumber>
    </recommendedName>
</protein>
<organism>
    <name type="scientific">Kluyveromyces lactis (strain ATCC 8585 / CBS 2359 / DSM 70799 / NBRC 1267 / NRRL Y-1140 / WM37)</name>
    <name type="common">Yeast</name>
    <name type="synonym">Candida sphaerica</name>
    <dbReference type="NCBI Taxonomy" id="284590"/>
    <lineage>
        <taxon>Eukaryota</taxon>
        <taxon>Fungi</taxon>
        <taxon>Dikarya</taxon>
        <taxon>Ascomycota</taxon>
        <taxon>Saccharomycotina</taxon>
        <taxon>Saccharomycetes</taxon>
        <taxon>Saccharomycetales</taxon>
        <taxon>Saccharomycetaceae</taxon>
        <taxon>Kluyveromyces</taxon>
    </lineage>
</organism>
<sequence length="536" mass="60547">MSITAGPKVTTTAALVNTDRKMNNHHSTQVLHGSGQHGMQPSGNNVLNGLANGATGLQSSASSTSTRDDSTIVGLHYKIGKKIGEGSFGVLFEGVNMINNVPVAIKFEPRKTDAPQLKDEYRTYKILSGSEGIPQAYYFGQEGLHNILVIDLLGPSLEDLFDWCGRRFSIKTVVHVAIQMITLIEELHDHDLIYRDIKPDNFLIGRPNQPDANMVHLIDFGMAKLYRDPKTKQHIPYREKKSLSGTARYMSINTHLGREQSRRDDMEALGHVFFYFLRGQLPWQGLKAANNKLKYEKIGEKKRSTNVYDLSQGLPVQFGRYLEIVRNLGFEETPDYEGYRKLLLSVLDELGQKLDGEYDWMKLNGGRGWDLAINKKPNLHGYGHPTPPNEKSKRHRNKFNQVPLAVNNLNGSNVPLQSHSPLPGGTDLTQGVSNAPQQPQQIMSQQQYQQHTQQRLDPMSYEAYKQQVQQRYAQQPQPTQQKAQKSPNNDTSQQQFSQNRQQQPQYQFQQNQPQNGKVQVADSNSEKGFFSKLGCC</sequence>